<evidence type="ECO:0000255" key="1">
    <source>
        <dbReference type="HAMAP-Rule" id="MF_01306"/>
    </source>
</evidence>
<evidence type="ECO:0000305" key="2"/>
<comment type="function">
    <text evidence="1">One of the primary rRNA binding proteins, it binds directly to 16S rRNA where it nucleates assembly of the body of the 30S subunit.</text>
</comment>
<comment type="function">
    <text evidence="1">With S5 and S12 plays an important role in translational accuracy.</text>
</comment>
<comment type="subunit">
    <text evidence="1">Part of the 30S ribosomal subunit. Contacts protein S5. The interaction surface between S4 and S5 is involved in control of translational fidelity.</text>
</comment>
<comment type="similarity">
    <text evidence="1">Belongs to the universal ribosomal protein uS4 family.</text>
</comment>
<sequence>MARYTGPQCKLCRREGMKLYLKGERCFTDKCAFDRRPFAPGDHGREKKKLTQYGIQLRAKQTMKRIYGVLEAQFRRYYEKAAKKSGDTRENLVVQVERRLDNVVYRLGFAVNRTTARQLVSHGHFLVNGKKVNIPSYQVRPGDVIEVREKSKDILPIKNAIELNKDKNRMPWLSVDFENYKGVYERHPKLEEVIDLPVDVQAIIELYSR</sequence>
<proteinExistence type="inferred from homology"/>
<organism>
    <name type="scientific">Thermosipho melanesiensis (strain DSM 12029 / CIP 104789 / BI429)</name>
    <dbReference type="NCBI Taxonomy" id="391009"/>
    <lineage>
        <taxon>Bacteria</taxon>
        <taxon>Thermotogati</taxon>
        <taxon>Thermotogota</taxon>
        <taxon>Thermotogae</taxon>
        <taxon>Thermotogales</taxon>
        <taxon>Fervidobacteriaceae</taxon>
        <taxon>Thermosipho</taxon>
    </lineage>
</organism>
<reference key="1">
    <citation type="submission" date="2007-05" db="EMBL/GenBank/DDBJ databases">
        <title>Complete sequence of Thermosipho melanesiensis BI429.</title>
        <authorList>
            <consortium name="US DOE Joint Genome Institute"/>
            <person name="Copeland A."/>
            <person name="Lucas S."/>
            <person name="Lapidus A."/>
            <person name="Barry K."/>
            <person name="Glavina del Rio T."/>
            <person name="Dalin E."/>
            <person name="Tice H."/>
            <person name="Pitluck S."/>
            <person name="Chertkov O."/>
            <person name="Brettin T."/>
            <person name="Bruce D."/>
            <person name="Detter J.C."/>
            <person name="Han C."/>
            <person name="Schmutz J."/>
            <person name="Larimer F."/>
            <person name="Land M."/>
            <person name="Hauser L."/>
            <person name="Kyrpides N."/>
            <person name="Mikhailova N."/>
            <person name="Nelson K."/>
            <person name="Gogarten J.P."/>
            <person name="Noll K."/>
            <person name="Richardson P."/>
        </authorList>
    </citation>
    <scope>NUCLEOTIDE SEQUENCE [LARGE SCALE GENOMIC DNA]</scope>
    <source>
        <strain>DSM 12029 / CIP 104789 / BI429</strain>
    </source>
</reference>
<protein>
    <recommendedName>
        <fullName evidence="1">Small ribosomal subunit protein uS4</fullName>
    </recommendedName>
    <alternativeName>
        <fullName evidence="2">30S ribosomal protein S4</fullName>
    </alternativeName>
</protein>
<feature type="chain" id="PRO_0000322346" description="Small ribosomal subunit protein uS4">
    <location>
        <begin position="1"/>
        <end position="209"/>
    </location>
</feature>
<feature type="domain" description="S4 RNA-binding" evidence="1">
    <location>
        <begin position="98"/>
        <end position="164"/>
    </location>
</feature>
<dbReference type="EMBL" id="CP000716">
    <property type="protein sequence ID" value="ABR30841.1"/>
    <property type="molecule type" value="Genomic_DNA"/>
</dbReference>
<dbReference type="RefSeq" id="WP_012057201.1">
    <property type="nucleotide sequence ID" value="NC_009616.1"/>
</dbReference>
<dbReference type="SMR" id="A6LLP0"/>
<dbReference type="STRING" id="391009.Tmel_0980"/>
<dbReference type="KEGG" id="tme:Tmel_0980"/>
<dbReference type="eggNOG" id="COG0522">
    <property type="taxonomic scope" value="Bacteria"/>
</dbReference>
<dbReference type="HOGENOM" id="CLU_092403_0_2_0"/>
<dbReference type="OrthoDB" id="9803672at2"/>
<dbReference type="Proteomes" id="UP000001110">
    <property type="component" value="Chromosome"/>
</dbReference>
<dbReference type="GO" id="GO:0015935">
    <property type="term" value="C:small ribosomal subunit"/>
    <property type="evidence" value="ECO:0007669"/>
    <property type="project" value="InterPro"/>
</dbReference>
<dbReference type="GO" id="GO:0019843">
    <property type="term" value="F:rRNA binding"/>
    <property type="evidence" value="ECO:0007669"/>
    <property type="project" value="UniProtKB-UniRule"/>
</dbReference>
<dbReference type="GO" id="GO:0003735">
    <property type="term" value="F:structural constituent of ribosome"/>
    <property type="evidence" value="ECO:0007669"/>
    <property type="project" value="InterPro"/>
</dbReference>
<dbReference type="GO" id="GO:0042274">
    <property type="term" value="P:ribosomal small subunit biogenesis"/>
    <property type="evidence" value="ECO:0007669"/>
    <property type="project" value="TreeGrafter"/>
</dbReference>
<dbReference type="GO" id="GO:0006412">
    <property type="term" value="P:translation"/>
    <property type="evidence" value="ECO:0007669"/>
    <property type="project" value="UniProtKB-UniRule"/>
</dbReference>
<dbReference type="CDD" id="cd00165">
    <property type="entry name" value="S4"/>
    <property type="match status" value="1"/>
</dbReference>
<dbReference type="FunFam" id="1.10.1050.10:FF:000001">
    <property type="entry name" value="30S ribosomal protein S4"/>
    <property type="match status" value="1"/>
</dbReference>
<dbReference type="FunFam" id="3.10.290.10:FF:000001">
    <property type="entry name" value="30S ribosomal protein S4"/>
    <property type="match status" value="1"/>
</dbReference>
<dbReference type="Gene3D" id="1.10.1050.10">
    <property type="entry name" value="Ribosomal Protein S4 Delta 41, Chain A, domain 1"/>
    <property type="match status" value="1"/>
</dbReference>
<dbReference type="Gene3D" id="3.10.290.10">
    <property type="entry name" value="RNA-binding S4 domain"/>
    <property type="match status" value="1"/>
</dbReference>
<dbReference type="HAMAP" id="MF_01306_B">
    <property type="entry name" value="Ribosomal_uS4_B"/>
    <property type="match status" value="1"/>
</dbReference>
<dbReference type="InterPro" id="IPR022801">
    <property type="entry name" value="Ribosomal_uS4"/>
</dbReference>
<dbReference type="InterPro" id="IPR005709">
    <property type="entry name" value="Ribosomal_uS4_bac-type"/>
</dbReference>
<dbReference type="InterPro" id="IPR001912">
    <property type="entry name" value="Ribosomal_uS4_N"/>
</dbReference>
<dbReference type="InterPro" id="IPR002942">
    <property type="entry name" value="S4_RNA-bd"/>
</dbReference>
<dbReference type="InterPro" id="IPR036986">
    <property type="entry name" value="S4_RNA-bd_sf"/>
</dbReference>
<dbReference type="NCBIfam" id="NF003717">
    <property type="entry name" value="PRK05327.1"/>
    <property type="match status" value="1"/>
</dbReference>
<dbReference type="NCBIfam" id="TIGR01017">
    <property type="entry name" value="rpsD_bact"/>
    <property type="match status" value="1"/>
</dbReference>
<dbReference type="PANTHER" id="PTHR11831">
    <property type="entry name" value="30S 40S RIBOSOMAL PROTEIN"/>
    <property type="match status" value="1"/>
</dbReference>
<dbReference type="PANTHER" id="PTHR11831:SF4">
    <property type="entry name" value="SMALL RIBOSOMAL SUBUNIT PROTEIN US4M"/>
    <property type="match status" value="1"/>
</dbReference>
<dbReference type="Pfam" id="PF00163">
    <property type="entry name" value="Ribosomal_S4"/>
    <property type="match status" value="1"/>
</dbReference>
<dbReference type="Pfam" id="PF01479">
    <property type="entry name" value="S4"/>
    <property type="match status" value="1"/>
</dbReference>
<dbReference type="SMART" id="SM01390">
    <property type="entry name" value="Ribosomal_S4"/>
    <property type="match status" value="1"/>
</dbReference>
<dbReference type="SMART" id="SM00363">
    <property type="entry name" value="S4"/>
    <property type="match status" value="1"/>
</dbReference>
<dbReference type="SUPFAM" id="SSF55174">
    <property type="entry name" value="Alpha-L RNA-binding motif"/>
    <property type="match status" value="1"/>
</dbReference>
<dbReference type="PROSITE" id="PS50889">
    <property type="entry name" value="S4"/>
    <property type="match status" value="1"/>
</dbReference>
<gene>
    <name evidence="1" type="primary">rpsD</name>
    <name type="ordered locus">Tmel_0980</name>
</gene>
<keyword id="KW-0687">Ribonucleoprotein</keyword>
<keyword id="KW-0689">Ribosomal protein</keyword>
<keyword id="KW-0694">RNA-binding</keyword>
<keyword id="KW-0699">rRNA-binding</keyword>
<accession>A6LLP0</accession>
<name>RS4_THEM4</name>